<comment type="subcellular location">
    <subcellularLocation>
        <location evidence="2">Secreted</location>
    </subcellularLocation>
</comment>
<comment type="similarity">
    <text evidence="4">Belongs to the Sct family.</text>
</comment>
<comment type="sequence caution" evidence="4">
    <conflict type="erroneous gene model prediction">
        <sequence resource="EMBL-CDS" id="AAA33217"/>
    </conflict>
</comment>
<proteinExistence type="inferred from homology"/>
<feature type="signal peptide" evidence="1">
    <location>
        <begin position="1"/>
        <end position="19"/>
    </location>
</feature>
<feature type="chain" id="PRO_0000361525" description="Secreted protein B">
    <location>
        <begin position="20"/>
        <end position="184"/>
    </location>
</feature>
<feature type="short sequence motif" description="Cell attachment site" evidence="1">
    <location>
        <begin position="164"/>
        <end position="166"/>
    </location>
</feature>
<feature type="glycosylation site" description="N-linked (GlcNAc...) asparagine" evidence="1">
    <location>
        <position position="129"/>
    </location>
</feature>
<dbReference type="EMBL" id="AAFI02000177">
    <property type="protein sequence ID" value="EAL61611.1"/>
    <property type="molecule type" value="Genomic_DNA"/>
</dbReference>
<dbReference type="EMBL" id="M16346">
    <property type="protein sequence ID" value="AAA33217.1"/>
    <property type="status" value="ALT_SEQ"/>
    <property type="molecule type" value="Genomic_DNA"/>
</dbReference>
<dbReference type="RefSeq" id="XP_635104.1">
    <property type="nucleotide sequence ID" value="XM_630012.1"/>
</dbReference>
<dbReference type="STRING" id="44689.Q23911"/>
<dbReference type="GlyCosmos" id="Q23911">
    <property type="glycosylation" value="1 site, No reported glycans"/>
</dbReference>
<dbReference type="GlyGen" id="Q23911">
    <property type="glycosylation" value="1 site"/>
</dbReference>
<dbReference type="PaxDb" id="44689-DDB0215394"/>
<dbReference type="EnsemblProtists" id="EAL61611">
    <property type="protein sequence ID" value="EAL61611"/>
    <property type="gene ID" value="DDB_G0291255"/>
</dbReference>
<dbReference type="GeneID" id="8628051"/>
<dbReference type="KEGG" id="ddi:DDB_G0291255"/>
<dbReference type="dictyBase" id="DDB_G0291255">
    <property type="gene designation" value="29C"/>
</dbReference>
<dbReference type="VEuPathDB" id="AmoebaDB:DDB_G0291255"/>
<dbReference type="eggNOG" id="ENOG502RHVE">
    <property type="taxonomic scope" value="Eukaryota"/>
</dbReference>
<dbReference type="HOGENOM" id="CLU_1470790_0_0_1"/>
<dbReference type="InParanoid" id="Q23911"/>
<dbReference type="OMA" id="AYESIDH"/>
<dbReference type="PhylomeDB" id="Q23911"/>
<dbReference type="PRO" id="PR:Q23911"/>
<dbReference type="Proteomes" id="UP000002195">
    <property type="component" value="Chromosome 6"/>
</dbReference>
<dbReference type="GO" id="GO:0005576">
    <property type="term" value="C:extracellular region"/>
    <property type="evidence" value="ECO:0007669"/>
    <property type="project" value="UniProtKB-SubCell"/>
</dbReference>
<dbReference type="CDD" id="cd22935">
    <property type="entry name" value="SctA-like"/>
    <property type="match status" value="1"/>
</dbReference>
<dbReference type="PANTHER" id="PTHR38742">
    <property type="entry name" value="PROTEIN GP17"/>
    <property type="match status" value="1"/>
</dbReference>
<dbReference type="PANTHER" id="PTHR38742:SF3">
    <property type="entry name" value="SECRETED PROTEIN B"/>
    <property type="match status" value="1"/>
</dbReference>
<evidence type="ECO:0000255" key="1"/>
<evidence type="ECO:0000269" key="2">
    <source>
    </source>
</evidence>
<evidence type="ECO:0000303" key="3">
    <source>
    </source>
</evidence>
<evidence type="ECO:0000305" key="4"/>
<organism>
    <name type="scientific">Dictyostelium discoideum</name>
    <name type="common">Social amoeba</name>
    <dbReference type="NCBI Taxonomy" id="44689"/>
    <lineage>
        <taxon>Eukaryota</taxon>
        <taxon>Amoebozoa</taxon>
        <taxon>Evosea</taxon>
        <taxon>Eumycetozoa</taxon>
        <taxon>Dictyostelia</taxon>
        <taxon>Dictyosteliales</taxon>
        <taxon>Dictyosteliaceae</taxon>
        <taxon>Dictyostelium</taxon>
    </lineage>
</organism>
<accession>Q23911</accession>
<accession>Q54EY6</accession>
<name>SCTB_DICDI</name>
<sequence>MRFILVLVLILGLVSSSFGINVDKNEVSQTELQSARDFSSFAIGFAEGIEISLTGNLHKCVAAAESSFSEFSNSFHLIDSGLKHKSLGDAKSGLRDFGIGLVDLVKTYQRCGVGKFISEISAISKEVTNETGIIKLIIHEVIDIFHNSHSLTSDFKSAISDCGRGDYTGCGVASGKIVGILMRQ</sequence>
<keyword id="KW-0325">Glycoprotein</keyword>
<keyword id="KW-1185">Reference proteome</keyword>
<keyword id="KW-0964">Secreted</keyword>
<keyword id="KW-0732">Signal</keyword>
<protein>
    <recommendedName>
        <fullName evidence="3">Secreted protein B</fullName>
    </recommendedName>
    <alternativeName>
        <fullName>Protein 29C</fullName>
    </alternativeName>
</protein>
<gene>
    <name type="primary">29C</name>
    <name evidence="3" type="synonym">sctB</name>
    <name type="ORF">DDB_G0291255</name>
</gene>
<reference key="1">
    <citation type="journal article" date="2005" name="Nature">
        <title>The genome of the social amoeba Dictyostelium discoideum.</title>
        <authorList>
            <person name="Eichinger L."/>
            <person name="Pachebat J.A."/>
            <person name="Gloeckner G."/>
            <person name="Rajandream M.A."/>
            <person name="Sucgang R."/>
            <person name="Berriman M."/>
            <person name="Song J."/>
            <person name="Olsen R."/>
            <person name="Szafranski K."/>
            <person name="Xu Q."/>
            <person name="Tunggal B."/>
            <person name="Kummerfeld S."/>
            <person name="Madera M."/>
            <person name="Konfortov B.A."/>
            <person name="Rivero F."/>
            <person name="Bankier A.T."/>
            <person name="Lehmann R."/>
            <person name="Hamlin N."/>
            <person name="Davies R."/>
            <person name="Gaudet P."/>
            <person name="Fey P."/>
            <person name="Pilcher K."/>
            <person name="Chen G."/>
            <person name="Saunders D."/>
            <person name="Sodergren E.J."/>
            <person name="Davis P."/>
            <person name="Kerhornou A."/>
            <person name="Nie X."/>
            <person name="Hall N."/>
            <person name="Anjard C."/>
            <person name="Hemphill L."/>
            <person name="Bason N."/>
            <person name="Farbrother P."/>
            <person name="Desany B."/>
            <person name="Just E."/>
            <person name="Morio T."/>
            <person name="Rost R."/>
            <person name="Churcher C.M."/>
            <person name="Cooper J."/>
            <person name="Haydock S."/>
            <person name="van Driessche N."/>
            <person name="Cronin A."/>
            <person name="Goodhead I."/>
            <person name="Muzny D.M."/>
            <person name="Mourier T."/>
            <person name="Pain A."/>
            <person name="Lu M."/>
            <person name="Harper D."/>
            <person name="Lindsay R."/>
            <person name="Hauser H."/>
            <person name="James K.D."/>
            <person name="Quiles M."/>
            <person name="Madan Babu M."/>
            <person name="Saito T."/>
            <person name="Buchrieser C."/>
            <person name="Wardroper A."/>
            <person name="Felder M."/>
            <person name="Thangavelu M."/>
            <person name="Johnson D."/>
            <person name="Knights A."/>
            <person name="Loulseged H."/>
            <person name="Mungall K.L."/>
            <person name="Oliver K."/>
            <person name="Price C."/>
            <person name="Quail M.A."/>
            <person name="Urushihara H."/>
            <person name="Hernandez J."/>
            <person name="Rabbinowitsch E."/>
            <person name="Steffen D."/>
            <person name="Sanders M."/>
            <person name="Ma J."/>
            <person name="Kohara Y."/>
            <person name="Sharp S."/>
            <person name="Simmonds M.N."/>
            <person name="Spiegler S."/>
            <person name="Tivey A."/>
            <person name="Sugano S."/>
            <person name="White B."/>
            <person name="Walker D."/>
            <person name="Woodward J.R."/>
            <person name="Winckler T."/>
            <person name="Tanaka Y."/>
            <person name="Shaulsky G."/>
            <person name="Schleicher M."/>
            <person name="Weinstock G.M."/>
            <person name="Rosenthal A."/>
            <person name="Cox E.C."/>
            <person name="Chisholm R.L."/>
            <person name="Gibbs R.A."/>
            <person name="Loomis W.F."/>
            <person name="Platzer M."/>
            <person name="Kay R.R."/>
            <person name="Williams J.G."/>
            <person name="Dear P.H."/>
            <person name="Noegel A.A."/>
            <person name="Barrell B.G."/>
            <person name="Kuspa A."/>
        </authorList>
    </citation>
    <scope>NUCLEOTIDE SEQUENCE [LARGE SCALE GENOMIC DNA]</scope>
    <source>
        <strain>AX4</strain>
    </source>
</reference>
<reference key="2">
    <citation type="journal article" date="1987" name="Mol. Cell. Biol.">
        <title>Developmental regulation of DNase I-hypersensitive sites in Dictyostelium discoideum.</title>
        <authorList>
            <person name="Ayres K."/>
            <person name="Neuman W."/>
            <person name="Rowekamp W.G."/>
            <person name="Chung S."/>
        </authorList>
    </citation>
    <scope>NUCLEOTIDE SEQUENCE [GENOMIC DNA] OF 1-61</scope>
    <source>
        <strain>AX3</strain>
    </source>
</reference>
<reference key="3">
    <citation type="journal article" date="2016" name="PLoS ONE">
        <title>Pycnosomes: condensed endosomal structures secreted by Dictyostelium amoebae.</title>
        <authorList>
            <person name="Sabra A."/>
            <person name="Leiba J."/>
            <person name="Mas L."/>
            <person name="Louwagie M."/>
            <person name="Coute Y."/>
            <person name="Journet A."/>
            <person name="Cosson P."/>
            <person name="Aubry L."/>
        </authorList>
    </citation>
    <scope>SUBCELLULAR LOCATION</scope>
</reference>